<proteinExistence type="inferred from homology"/>
<sequence length="140" mass="15969">MADVDESDLKILEILRKNARTPYTSIAKELKISEAAVRKRIEKLIKMGVIKRFTIDYELENEIRAIVMVKTNPQIPTPEISKKIIKIQGVEFVYETTGDYDILTVVRGTNISSINKTIDDIRSLQGVLSTNSTIVLRVWF</sequence>
<organism>
    <name type="scientific">Sulfurisphaera tokodaii (strain DSM 16993 / JCM 10545 / NBRC 100140 / 7)</name>
    <name type="common">Sulfolobus tokodaii</name>
    <dbReference type="NCBI Taxonomy" id="273063"/>
    <lineage>
        <taxon>Archaea</taxon>
        <taxon>Thermoproteota</taxon>
        <taxon>Thermoprotei</taxon>
        <taxon>Sulfolobales</taxon>
        <taxon>Sulfolobaceae</taxon>
        <taxon>Sulfurisphaera</taxon>
    </lineage>
</organism>
<dbReference type="EMBL" id="BA000023">
    <property type="protein sequence ID" value="BAB65150.1"/>
    <property type="molecule type" value="Genomic_DNA"/>
</dbReference>
<dbReference type="RefSeq" id="WP_010978132.1">
    <property type="nucleotide sequence ID" value="NC_003106.2"/>
</dbReference>
<dbReference type="SMR" id="Q976J7"/>
<dbReference type="STRING" id="273063.STK_01930"/>
<dbReference type="GeneID" id="95643821"/>
<dbReference type="KEGG" id="sto:STK_01930"/>
<dbReference type="PATRIC" id="fig|273063.9.peg.237"/>
<dbReference type="eggNOG" id="arCOG01580">
    <property type="taxonomic scope" value="Archaea"/>
</dbReference>
<dbReference type="OrthoDB" id="14434at2157"/>
<dbReference type="UniPathway" id="UPA00033"/>
<dbReference type="Proteomes" id="UP000001015">
    <property type="component" value="Chromosome"/>
</dbReference>
<dbReference type="GO" id="GO:0005737">
    <property type="term" value="C:cytoplasm"/>
    <property type="evidence" value="ECO:0007669"/>
    <property type="project" value="UniProtKB-SubCell"/>
</dbReference>
<dbReference type="GO" id="GO:0043565">
    <property type="term" value="F:sequence-specific DNA binding"/>
    <property type="evidence" value="ECO:0007669"/>
    <property type="project" value="InterPro"/>
</dbReference>
<dbReference type="GO" id="GO:0019878">
    <property type="term" value="P:lysine biosynthetic process via aminoadipic acid"/>
    <property type="evidence" value="ECO:0007669"/>
    <property type="project" value="UniProtKB-UniPathway"/>
</dbReference>
<dbReference type="CDD" id="cd00090">
    <property type="entry name" value="HTH_ARSR"/>
    <property type="match status" value="1"/>
</dbReference>
<dbReference type="Gene3D" id="3.30.70.920">
    <property type="match status" value="1"/>
</dbReference>
<dbReference type="Gene3D" id="1.10.10.10">
    <property type="entry name" value="Winged helix-like DNA-binding domain superfamily/Winged helix DNA-binding domain"/>
    <property type="match status" value="1"/>
</dbReference>
<dbReference type="InterPro" id="IPR011991">
    <property type="entry name" value="ArsR-like_HTH"/>
</dbReference>
<dbReference type="InterPro" id="IPR000485">
    <property type="entry name" value="AsnC-type_HTH_dom"/>
</dbReference>
<dbReference type="InterPro" id="IPR011008">
    <property type="entry name" value="Dimeric_a/b-barrel"/>
</dbReference>
<dbReference type="InterPro" id="IPR053483">
    <property type="entry name" value="HTH-Lysine_Regulator"/>
</dbReference>
<dbReference type="InterPro" id="IPR050684">
    <property type="entry name" value="HTH-Siroheme_Decarb"/>
</dbReference>
<dbReference type="InterPro" id="IPR019888">
    <property type="entry name" value="Tscrpt_reg_AsnC-like"/>
</dbReference>
<dbReference type="InterPro" id="IPR019887">
    <property type="entry name" value="Tscrpt_reg_AsnC/Lrp_C"/>
</dbReference>
<dbReference type="InterPro" id="IPR036388">
    <property type="entry name" value="WH-like_DNA-bd_sf"/>
</dbReference>
<dbReference type="InterPro" id="IPR036390">
    <property type="entry name" value="WH_DNA-bd_sf"/>
</dbReference>
<dbReference type="NCBIfam" id="NF040947">
    <property type="entry name" value="trans_reg_LysM"/>
    <property type="match status" value="1"/>
</dbReference>
<dbReference type="PANTHER" id="PTHR43413:SF4">
    <property type="entry name" value="HTH-TYPE TRANSCRIPTIONAL REGULATOR LYSM"/>
    <property type="match status" value="1"/>
</dbReference>
<dbReference type="PANTHER" id="PTHR43413">
    <property type="entry name" value="TRANSCRIPTIONAL REGULATOR, ASNC FAMILY"/>
    <property type="match status" value="1"/>
</dbReference>
<dbReference type="Pfam" id="PF01037">
    <property type="entry name" value="AsnC_trans_reg"/>
    <property type="match status" value="1"/>
</dbReference>
<dbReference type="Pfam" id="PF13412">
    <property type="entry name" value="HTH_24"/>
    <property type="match status" value="1"/>
</dbReference>
<dbReference type="PRINTS" id="PR00033">
    <property type="entry name" value="HTHASNC"/>
</dbReference>
<dbReference type="SMART" id="SM00344">
    <property type="entry name" value="HTH_ASNC"/>
    <property type="match status" value="1"/>
</dbReference>
<dbReference type="SUPFAM" id="SSF54909">
    <property type="entry name" value="Dimeric alpha+beta barrel"/>
    <property type="match status" value="1"/>
</dbReference>
<dbReference type="SUPFAM" id="SSF46785">
    <property type="entry name" value="Winged helix' DNA-binding domain"/>
    <property type="match status" value="1"/>
</dbReference>
<dbReference type="PROSITE" id="PS50956">
    <property type="entry name" value="HTH_ASNC_2"/>
    <property type="match status" value="1"/>
</dbReference>
<protein>
    <recommendedName>
        <fullName>HTH-type transcriptional regulator LysM</fullName>
    </recommendedName>
</protein>
<comment type="function">
    <text evidence="1">In the absence or at low concentrations of lysine, activates the biosynthesis of this amino acid via the alpha-aminoadipate (AAA) pathway.</text>
</comment>
<comment type="pathway">
    <text>Amino-acid biosynthesis; L-lysine biosynthesis via AAA pathway [regulation].</text>
</comment>
<comment type="subunit">
    <text evidence="1">Homotetramer.</text>
</comment>
<comment type="subcellular location">
    <subcellularLocation>
        <location evidence="3">Cytoplasm</location>
    </subcellularLocation>
</comment>
<gene>
    <name type="primary">lysM</name>
    <name type="ordered locus">STK_01930</name>
</gene>
<keyword id="KW-0010">Activator</keyword>
<keyword id="KW-0963">Cytoplasm</keyword>
<keyword id="KW-0238">DNA-binding</keyword>
<keyword id="KW-1185">Reference proteome</keyword>
<keyword id="KW-0804">Transcription</keyword>
<keyword id="KW-0805">Transcription regulation</keyword>
<reference key="1">
    <citation type="journal article" date="2001" name="DNA Res.">
        <title>Complete genome sequence of an aerobic thermoacidophilic Crenarchaeon, Sulfolobus tokodaii strain7.</title>
        <authorList>
            <person name="Kawarabayasi Y."/>
            <person name="Hino Y."/>
            <person name="Horikawa H."/>
            <person name="Jin-no K."/>
            <person name="Takahashi M."/>
            <person name="Sekine M."/>
            <person name="Baba S."/>
            <person name="Ankai A."/>
            <person name="Kosugi H."/>
            <person name="Hosoyama A."/>
            <person name="Fukui S."/>
            <person name="Nagai Y."/>
            <person name="Nishijima K."/>
            <person name="Otsuka R."/>
            <person name="Nakazawa H."/>
            <person name="Takamiya M."/>
            <person name="Kato Y."/>
            <person name="Yoshizawa T."/>
            <person name="Tanaka T."/>
            <person name="Kudoh Y."/>
            <person name="Yamazaki J."/>
            <person name="Kushida N."/>
            <person name="Oguchi A."/>
            <person name="Aoki K."/>
            <person name="Masuda S."/>
            <person name="Yanagii M."/>
            <person name="Nishimura M."/>
            <person name="Yamagishi A."/>
            <person name="Oshima T."/>
            <person name="Kikuchi H."/>
        </authorList>
    </citation>
    <scope>NUCLEOTIDE SEQUENCE [LARGE SCALE GENOMIC DNA]</scope>
    <source>
        <strain>DSM 16993 / JCM 10545 / NBRC 100140 / 7</strain>
    </source>
</reference>
<name>LYSM_SULTO</name>
<accession>Q976J7</accession>
<feature type="chain" id="PRO_0000111743" description="HTH-type transcriptional regulator LysM">
    <location>
        <begin position="1"/>
        <end position="140"/>
    </location>
</feature>
<feature type="domain" description="HTH asnC-type" evidence="2">
    <location>
        <begin position="4"/>
        <end position="67"/>
    </location>
</feature>
<feature type="DNA-binding region" description="H-T-H motif" evidence="2">
    <location>
        <begin position="23"/>
        <end position="42"/>
    </location>
</feature>
<evidence type="ECO:0000250" key="1"/>
<evidence type="ECO:0000255" key="2">
    <source>
        <dbReference type="PROSITE-ProRule" id="PRU00319"/>
    </source>
</evidence>
<evidence type="ECO:0000305" key="3"/>